<proteinExistence type="inferred from homology"/>
<keyword id="KW-0150">Chloroplast</keyword>
<keyword id="KW-0934">Plastid</keyword>
<keyword id="KW-0687">Ribonucleoprotein</keyword>
<keyword id="KW-0689">Ribosomal protein</keyword>
<accession>A4QKN3</accession>
<reference key="1">
    <citation type="submission" date="2007-03" db="EMBL/GenBank/DDBJ databases">
        <title>Sequencing analysis of Capsella bursa-pastoris JO22 chloroplast DNA.</title>
        <authorList>
            <person name="Hosouchi T."/>
            <person name="Tsuruoka H."/>
            <person name="Kotani H."/>
        </authorList>
    </citation>
    <scope>NUCLEOTIDE SEQUENCE [LARGE SCALE GENOMIC DNA]</scope>
</reference>
<organism>
    <name type="scientific">Capsella bursa-pastoris</name>
    <name type="common">Shepherd's purse</name>
    <name type="synonym">Thlaspi bursa-pastoris</name>
    <dbReference type="NCBI Taxonomy" id="3719"/>
    <lineage>
        <taxon>Eukaryota</taxon>
        <taxon>Viridiplantae</taxon>
        <taxon>Streptophyta</taxon>
        <taxon>Embryophyta</taxon>
        <taxon>Tracheophyta</taxon>
        <taxon>Spermatophyta</taxon>
        <taxon>Magnoliopsida</taxon>
        <taxon>eudicotyledons</taxon>
        <taxon>Gunneridae</taxon>
        <taxon>Pentapetalae</taxon>
        <taxon>rosids</taxon>
        <taxon>malvids</taxon>
        <taxon>Brassicales</taxon>
        <taxon>Brassicaceae</taxon>
        <taxon>Camelineae</taxon>
        <taxon>Capsella</taxon>
    </lineage>
</organism>
<evidence type="ECO:0000250" key="1"/>
<evidence type="ECO:0000255" key="2">
    <source>
        <dbReference type="HAMAP-Rule" id="MF_01320"/>
    </source>
</evidence>
<evidence type="ECO:0000256" key="3">
    <source>
        <dbReference type="SAM" id="MobiDB-lite"/>
    </source>
</evidence>
<evidence type="ECO:0000305" key="4"/>
<protein>
    <recommendedName>
        <fullName evidence="2">Large ribosomal subunit protein uL2cz/uL2cy</fullName>
    </recommendedName>
    <alternativeName>
        <fullName evidence="4">50S ribosomal protein L2, chloroplastic</fullName>
    </alternativeName>
</protein>
<name>RK2_CAPBU</name>
<feature type="chain" id="PRO_0000310067" description="Large ribosomal subunit protein uL2cz/uL2cy">
    <location>
        <begin position="1"/>
        <end position="274"/>
    </location>
</feature>
<feature type="region of interest" description="Disordered" evidence="3">
    <location>
        <begin position="224"/>
        <end position="252"/>
    </location>
</feature>
<dbReference type="EMBL" id="AP009371">
    <property type="protein sequence ID" value="BAF50238.1"/>
    <property type="molecule type" value="Genomic_DNA"/>
</dbReference>
<dbReference type="EMBL" id="AP009371">
    <property type="protein sequence ID" value="BAF50265.1"/>
    <property type="molecule type" value="Genomic_DNA"/>
</dbReference>
<dbReference type="SMR" id="A4QKN3"/>
<dbReference type="GO" id="GO:0009507">
    <property type="term" value="C:chloroplast"/>
    <property type="evidence" value="ECO:0007669"/>
    <property type="project" value="UniProtKB-SubCell"/>
</dbReference>
<dbReference type="GO" id="GO:0005762">
    <property type="term" value="C:mitochondrial large ribosomal subunit"/>
    <property type="evidence" value="ECO:0007669"/>
    <property type="project" value="TreeGrafter"/>
</dbReference>
<dbReference type="GO" id="GO:0019843">
    <property type="term" value="F:rRNA binding"/>
    <property type="evidence" value="ECO:0007669"/>
    <property type="project" value="UniProtKB-UniRule"/>
</dbReference>
<dbReference type="GO" id="GO:0003735">
    <property type="term" value="F:structural constituent of ribosome"/>
    <property type="evidence" value="ECO:0007669"/>
    <property type="project" value="InterPro"/>
</dbReference>
<dbReference type="GO" id="GO:0016740">
    <property type="term" value="F:transferase activity"/>
    <property type="evidence" value="ECO:0007669"/>
    <property type="project" value="InterPro"/>
</dbReference>
<dbReference type="GO" id="GO:0032543">
    <property type="term" value="P:mitochondrial translation"/>
    <property type="evidence" value="ECO:0007669"/>
    <property type="project" value="TreeGrafter"/>
</dbReference>
<dbReference type="FunFam" id="4.10.950.10:FF:000001">
    <property type="entry name" value="50S ribosomal protein L2"/>
    <property type="match status" value="1"/>
</dbReference>
<dbReference type="FunFam" id="2.30.30.30:FF:000008">
    <property type="entry name" value="50S ribosomal protein L2, chloroplastic"/>
    <property type="match status" value="1"/>
</dbReference>
<dbReference type="FunFam" id="2.40.50.140:FF:000029">
    <property type="entry name" value="50S ribosomal protein L2, chloroplastic"/>
    <property type="match status" value="1"/>
</dbReference>
<dbReference type="Gene3D" id="2.30.30.30">
    <property type="match status" value="1"/>
</dbReference>
<dbReference type="Gene3D" id="2.40.50.140">
    <property type="entry name" value="Nucleic acid-binding proteins"/>
    <property type="match status" value="1"/>
</dbReference>
<dbReference type="Gene3D" id="4.10.950.10">
    <property type="entry name" value="Ribosomal protein L2, domain 3"/>
    <property type="match status" value="1"/>
</dbReference>
<dbReference type="HAMAP" id="MF_01320_B">
    <property type="entry name" value="Ribosomal_uL2_B"/>
    <property type="match status" value="1"/>
</dbReference>
<dbReference type="InterPro" id="IPR012340">
    <property type="entry name" value="NA-bd_OB-fold"/>
</dbReference>
<dbReference type="InterPro" id="IPR014722">
    <property type="entry name" value="Rib_uL2_dom2"/>
</dbReference>
<dbReference type="InterPro" id="IPR002171">
    <property type="entry name" value="Ribosomal_uL2"/>
</dbReference>
<dbReference type="InterPro" id="IPR005880">
    <property type="entry name" value="Ribosomal_uL2_bac/org-type"/>
</dbReference>
<dbReference type="InterPro" id="IPR022669">
    <property type="entry name" value="Ribosomal_uL2_C"/>
</dbReference>
<dbReference type="InterPro" id="IPR022671">
    <property type="entry name" value="Ribosomal_uL2_CS"/>
</dbReference>
<dbReference type="InterPro" id="IPR014726">
    <property type="entry name" value="Ribosomal_uL2_dom3"/>
</dbReference>
<dbReference type="InterPro" id="IPR022666">
    <property type="entry name" value="Ribosomal_uL2_RNA-bd_dom"/>
</dbReference>
<dbReference type="InterPro" id="IPR008991">
    <property type="entry name" value="Translation_prot_SH3-like_sf"/>
</dbReference>
<dbReference type="NCBIfam" id="TIGR01171">
    <property type="entry name" value="rplB_bact"/>
    <property type="match status" value="1"/>
</dbReference>
<dbReference type="PANTHER" id="PTHR13691:SF5">
    <property type="entry name" value="LARGE RIBOSOMAL SUBUNIT PROTEIN UL2M"/>
    <property type="match status" value="1"/>
</dbReference>
<dbReference type="PANTHER" id="PTHR13691">
    <property type="entry name" value="RIBOSOMAL PROTEIN L2"/>
    <property type="match status" value="1"/>
</dbReference>
<dbReference type="Pfam" id="PF00181">
    <property type="entry name" value="Ribosomal_L2"/>
    <property type="match status" value="1"/>
</dbReference>
<dbReference type="Pfam" id="PF03947">
    <property type="entry name" value="Ribosomal_L2_C"/>
    <property type="match status" value="1"/>
</dbReference>
<dbReference type="PIRSF" id="PIRSF002158">
    <property type="entry name" value="Ribosomal_L2"/>
    <property type="match status" value="1"/>
</dbReference>
<dbReference type="SMART" id="SM01383">
    <property type="entry name" value="Ribosomal_L2"/>
    <property type="match status" value="1"/>
</dbReference>
<dbReference type="SMART" id="SM01382">
    <property type="entry name" value="Ribosomal_L2_C"/>
    <property type="match status" value="1"/>
</dbReference>
<dbReference type="SUPFAM" id="SSF50249">
    <property type="entry name" value="Nucleic acid-binding proteins"/>
    <property type="match status" value="1"/>
</dbReference>
<dbReference type="SUPFAM" id="SSF50104">
    <property type="entry name" value="Translation proteins SH3-like domain"/>
    <property type="match status" value="1"/>
</dbReference>
<dbReference type="PROSITE" id="PS00467">
    <property type="entry name" value="RIBOSOMAL_L2"/>
    <property type="match status" value="1"/>
</dbReference>
<comment type="subunit">
    <text evidence="1">Part of the 50S ribosomal subunit.</text>
</comment>
<comment type="subcellular location">
    <subcellularLocation>
        <location>Plastid</location>
        <location>Chloroplast</location>
    </subcellularLocation>
</comment>
<comment type="similarity">
    <text evidence="4">Belongs to the universal ribosomal protein uL2 family.</text>
</comment>
<gene>
    <name type="primary">rpl2-A</name>
</gene>
<gene>
    <name type="primary">rpl2-B</name>
</gene>
<sequence length="274" mass="29962">MAIYLYKTSTPSTRNGAVDSQVKSNPRNNLIYGQHHCGKGRNARGIITARHRGGGHKRLYRKIDFRRNANDIYGRIVTIEYDPNRNAYICLIHYGDGEKRYILHPRGAIIGDTIVSGTEVPIKMGNALPLTDMPLGTAIHNIEITLGKGGQLARAAGAVAKLIAKEGKSATLKLPSGEVRLISKNCSATVGQVGNVGVNQKSLGRAGSKRWLGKRPVVRGVVMNPVDHPHGGGEGRAPIGRKKPVTPWGYPALGRRTRKRKKYSETLILRRRSK</sequence>
<geneLocation type="chloroplast"/>